<reference key="1">
    <citation type="journal article" date="2005" name="Proc. Natl. Acad. Sci. U.S.A.">
        <title>Complete genome sequence of Vibrio fischeri: a symbiotic bacterium with pathogenic congeners.</title>
        <authorList>
            <person name="Ruby E.G."/>
            <person name="Urbanowski M."/>
            <person name="Campbell J."/>
            <person name="Dunn A."/>
            <person name="Faini M."/>
            <person name="Gunsalus R."/>
            <person name="Lostroh P."/>
            <person name="Lupp C."/>
            <person name="McCann J."/>
            <person name="Millikan D."/>
            <person name="Schaefer A."/>
            <person name="Stabb E."/>
            <person name="Stevens A."/>
            <person name="Visick K."/>
            <person name="Whistler C."/>
            <person name="Greenberg E.P."/>
        </authorList>
    </citation>
    <scope>NUCLEOTIDE SEQUENCE [LARGE SCALE GENOMIC DNA]</scope>
    <source>
        <strain>ATCC 700601 / ES114</strain>
    </source>
</reference>
<sequence length="284" mass="31018">MQNQKTVKIGNIDVANDKPFTLFAGMNVLESRDLAMQICEKYVEVTDRLGIPYVFKASFDKANRSSVHSYRGPGMEEGLKIFQELKDTFGVKIITDIHTEAQAQPVADVVDVIQLPAFLARQTDLVEAMAKTGAVINVKKPQFMSPDQVGNIIDKFSECGNENIILCERGSCMGYDNLVVDMLGFGVMKKASNGSPIIFDVTHSLQNRDPSGKASGGRRSQTVELAKAGLATGIAGLFIEAHPNPDKALCDGPSALPLDQLEPFLKQMKSLDDLIKGFEHIDIK</sequence>
<organism>
    <name type="scientific">Aliivibrio fischeri (strain ATCC 700601 / ES114)</name>
    <name type="common">Vibrio fischeri</name>
    <dbReference type="NCBI Taxonomy" id="312309"/>
    <lineage>
        <taxon>Bacteria</taxon>
        <taxon>Pseudomonadati</taxon>
        <taxon>Pseudomonadota</taxon>
        <taxon>Gammaproteobacteria</taxon>
        <taxon>Vibrionales</taxon>
        <taxon>Vibrionaceae</taxon>
        <taxon>Aliivibrio</taxon>
    </lineage>
</organism>
<evidence type="ECO:0000255" key="1">
    <source>
        <dbReference type="HAMAP-Rule" id="MF_00056"/>
    </source>
</evidence>
<feature type="chain" id="PRO_0000304501" description="2-dehydro-3-deoxyphosphooctonate aldolase">
    <location>
        <begin position="1"/>
        <end position="284"/>
    </location>
</feature>
<keyword id="KW-0963">Cytoplasm</keyword>
<keyword id="KW-0448">Lipopolysaccharide biosynthesis</keyword>
<keyword id="KW-1185">Reference proteome</keyword>
<keyword id="KW-0808">Transferase</keyword>
<accession>Q5E6S9</accession>
<gene>
    <name evidence="1" type="primary">kdsA</name>
    <name type="ordered locus">VF_0772</name>
</gene>
<protein>
    <recommendedName>
        <fullName evidence="1">2-dehydro-3-deoxyphosphooctonate aldolase</fullName>
        <ecNumber evidence="1">2.5.1.55</ecNumber>
    </recommendedName>
    <alternativeName>
        <fullName evidence="1">3-deoxy-D-manno-octulosonic acid 8-phosphate synthase</fullName>
    </alternativeName>
    <alternativeName>
        <fullName evidence="1">KDO-8-phosphate synthase</fullName>
        <shortName evidence="1">KDO 8-P synthase</shortName>
        <shortName evidence="1">KDOPS</shortName>
    </alternativeName>
    <alternativeName>
        <fullName evidence="1">Phospho-2-dehydro-3-deoxyoctonate aldolase</fullName>
    </alternativeName>
</protein>
<proteinExistence type="inferred from homology"/>
<comment type="catalytic activity">
    <reaction evidence="1">
        <text>D-arabinose 5-phosphate + phosphoenolpyruvate + H2O = 3-deoxy-alpha-D-manno-2-octulosonate-8-phosphate + phosphate</text>
        <dbReference type="Rhea" id="RHEA:14053"/>
        <dbReference type="ChEBI" id="CHEBI:15377"/>
        <dbReference type="ChEBI" id="CHEBI:43474"/>
        <dbReference type="ChEBI" id="CHEBI:57693"/>
        <dbReference type="ChEBI" id="CHEBI:58702"/>
        <dbReference type="ChEBI" id="CHEBI:85985"/>
        <dbReference type="EC" id="2.5.1.55"/>
    </reaction>
</comment>
<comment type="pathway">
    <text evidence="1">Carbohydrate biosynthesis; 3-deoxy-D-manno-octulosonate biosynthesis; 3-deoxy-D-manno-octulosonate from D-ribulose 5-phosphate: step 2/3.</text>
</comment>
<comment type="pathway">
    <text evidence="1">Bacterial outer membrane biogenesis; lipopolysaccharide biosynthesis.</text>
</comment>
<comment type="subcellular location">
    <subcellularLocation>
        <location evidence="1">Cytoplasm</location>
    </subcellularLocation>
</comment>
<comment type="similarity">
    <text evidence="1">Belongs to the KdsA family.</text>
</comment>
<name>KDSA_ALIF1</name>
<dbReference type="EC" id="2.5.1.55" evidence="1"/>
<dbReference type="EMBL" id="CP000020">
    <property type="protein sequence ID" value="AAW85267.1"/>
    <property type="molecule type" value="Genomic_DNA"/>
</dbReference>
<dbReference type="RefSeq" id="WP_005418209.1">
    <property type="nucleotide sequence ID" value="NZ_CAWLES010000001.1"/>
</dbReference>
<dbReference type="RefSeq" id="YP_204155.1">
    <property type="nucleotide sequence ID" value="NC_006840.2"/>
</dbReference>
<dbReference type="SMR" id="Q5E6S9"/>
<dbReference type="STRING" id="312309.VF_0772"/>
<dbReference type="EnsemblBacteria" id="AAW85267">
    <property type="protein sequence ID" value="AAW85267"/>
    <property type="gene ID" value="VF_0772"/>
</dbReference>
<dbReference type="GeneID" id="54163439"/>
<dbReference type="KEGG" id="vfi:VF_0772"/>
<dbReference type="PATRIC" id="fig|312309.11.peg.764"/>
<dbReference type="eggNOG" id="COG2877">
    <property type="taxonomic scope" value="Bacteria"/>
</dbReference>
<dbReference type="HOGENOM" id="CLU_036666_0_0_6"/>
<dbReference type="OrthoDB" id="9776934at2"/>
<dbReference type="UniPathway" id="UPA00030"/>
<dbReference type="UniPathway" id="UPA00357">
    <property type="reaction ID" value="UER00474"/>
</dbReference>
<dbReference type="Proteomes" id="UP000000537">
    <property type="component" value="Chromosome I"/>
</dbReference>
<dbReference type="GO" id="GO:0005737">
    <property type="term" value="C:cytoplasm"/>
    <property type="evidence" value="ECO:0007669"/>
    <property type="project" value="UniProtKB-SubCell"/>
</dbReference>
<dbReference type="GO" id="GO:0008676">
    <property type="term" value="F:3-deoxy-8-phosphooctulonate synthase activity"/>
    <property type="evidence" value="ECO:0007669"/>
    <property type="project" value="UniProtKB-UniRule"/>
</dbReference>
<dbReference type="GO" id="GO:0019294">
    <property type="term" value="P:keto-3-deoxy-D-manno-octulosonic acid biosynthetic process"/>
    <property type="evidence" value="ECO:0007669"/>
    <property type="project" value="UniProtKB-UniRule"/>
</dbReference>
<dbReference type="FunFam" id="3.20.20.70:FF:000058">
    <property type="entry name" value="2-dehydro-3-deoxyphosphooctonate aldolase"/>
    <property type="match status" value="1"/>
</dbReference>
<dbReference type="Gene3D" id="3.20.20.70">
    <property type="entry name" value="Aldolase class I"/>
    <property type="match status" value="1"/>
</dbReference>
<dbReference type="HAMAP" id="MF_00056">
    <property type="entry name" value="KDO8P_synth"/>
    <property type="match status" value="1"/>
</dbReference>
<dbReference type="InterPro" id="IPR013785">
    <property type="entry name" value="Aldolase_TIM"/>
</dbReference>
<dbReference type="InterPro" id="IPR006218">
    <property type="entry name" value="DAHP1/KDSA"/>
</dbReference>
<dbReference type="InterPro" id="IPR006269">
    <property type="entry name" value="KDO8P_synthase"/>
</dbReference>
<dbReference type="NCBIfam" id="TIGR01362">
    <property type="entry name" value="KDO8P_synth"/>
    <property type="match status" value="1"/>
</dbReference>
<dbReference type="NCBIfam" id="NF003543">
    <property type="entry name" value="PRK05198.1"/>
    <property type="match status" value="1"/>
</dbReference>
<dbReference type="NCBIfam" id="NF009109">
    <property type="entry name" value="PRK12457.1"/>
    <property type="match status" value="1"/>
</dbReference>
<dbReference type="PANTHER" id="PTHR21057">
    <property type="entry name" value="PHOSPHO-2-DEHYDRO-3-DEOXYHEPTONATE ALDOLASE"/>
    <property type="match status" value="1"/>
</dbReference>
<dbReference type="Pfam" id="PF00793">
    <property type="entry name" value="DAHP_synth_1"/>
    <property type="match status" value="1"/>
</dbReference>
<dbReference type="SUPFAM" id="SSF51569">
    <property type="entry name" value="Aldolase"/>
    <property type="match status" value="1"/>
</dbReference>